<accession>A7HSW1</accession>
<sequence>MNISKFEQRTLHALARGGLIRVEKDDKGKIHTATCVTREGWLLADCTVATFRRLRKRRLIASKDGSPYRITREGLHAVRAQLDNR</sequence>
<keyword id="KW-1185">Reference proteome</keyword>
<organism>
    <name type="scientific">Parvibaculum lavamentivorans (strain DS-1 / DSM 13023 / NCIMB 13966)</name>
    <dbReference type="NCBI Taxonomy" id="402881"/>
    <lineage>
        <taxon>Bacteria</taxon>
        <taxon>Pseudomonadati</taxon>
        <taxon>Pseudomonadota</taxon>
        <taxon>Alphaproteobacteria</taxon>
        <taxon>Hyphomicrobiales</taxon>
        <taxon>Parvibaculaceae</taxon>
        <taxon>Parvibaculum</taxon>
    </lineage>
</organism>
<reference key="1">
    <citation type="journal article" date="2011" name="Stand. Genomic Sci.">
        <title>Complete genome sequence of Parvibaculum lavamentivorans type strain (DS-1(T)).</title>
        <authorList>
            <person name="Schleheck D."/>
            <person name="Weiss M."/>
            <person name="Pitluck S."/>
            <person name="Bruce D."/>
            <person name="Land M.L."/>
            <person name="Han S."/>
            <person name="Saunders E."/>
            <person name="Tapia R."/>
            <person name="Detter C."/>
            <person name="Brettin T."/>
            <person name="Han J."/>
            <person name="Woyke T."/>
            <person name="Goodwin L."/>
            <person name="Pennacchio L."/>
            <person name="Nolan M."/>
            <person name="Cook A.M."/>
            <person name="Kjelleberg S."/>
            <person name="Thomas T."/>
        </authorList>
    </citation>
    <scope>NUCLEOTIDE SEQUENCE [LARGE SCALE GENOMIC DNA]</scope>
    <source>
        <strain>DS-1 / DSM 13023 / NCIMB 13966</strain>
    </source>
</reference>
<gene>
    <name type="ordered locus">Plav_1374</name>
</gene>
<proteinExistence type="inferred from homology"/>
<name>Y1374_PARL1</name>
<evidence type="ECO:0000255" key="1">
    <source>
        <dbReference type="HAMAP-Rule" id="MF_00827"/>
    </source>
</evidence>
<comment type="similarity">
    <text evidence="1">Belongs to the UPF0386 family.</text>
</comment>
<protein>
    <recommendedName>
        <fullName evidence="1">UPF0386 protein Plav_1374</fullName>
    </recommendedName>
</protein>
<dbReference type="EMBL" id="CP000774">
    <property type="protein sequence ID" value="ABS62994.1"/>
    <property type="molecule type" value="Genomic_DNA"/>
</dbReference>
<dbReference type="RefSeq" id="WP_012110269.1">
    <property type="nucleotide sequence ID" value="NC_009719.1"/>
</dbReference>
<dbReference type="STRING" id="402881.Plav_1374"/>
<dbReference type="KEGG" id="pla:Plav_1374"/>
<dbReference type="eggNOG" id="COG3811">
    <property type="taxonomic scope" value="Bacteria"/>
</dbReference>
<dbReference type="HOGENOM" id="CLU_164736_0_0_5"/>
<dbReference type="OrthoDB" id="7204880at2"/>
<dbReference type="Proteomes" id="UP000006377">
    <property type="component" value="Chromosome"/>
</dbReference>
<dbReference type="HAMAP" id="MF_00827">
    <property type="entry name" value="UPF0386"/>
    <property type="match status" value="1"/>
</dbReference>
<dbReference type="InterPro" id="IPR018654">
    <property type="entry name" value="YjhX_toxin"/>
</dbReference>
<dbReference type="NCBIfam" id="NF010240">
    <property type="entry name" value="PRK13687.1"/>
    <property type="match status" value="1"/>
</dbReference>
<dbReference type="Pfam" id="PF09857">
    <property type="entry name" value="YjhX_toxin"/>
    <property type="match status" value="1"/>
</dbReference>
<feature type="chain" id="PRO_1000072888" description="UPF0386 protein Plav_1374">
    <location>
        <begin position="1"/>
        <end position="85"/>
    </location>
</feature>